<proteinExistence type="inferred from homology"/>
<protein>
    <recommendedName>
        <fullName evidence="1">ATP synthase subunit delta</fullName>
    </recommendedName>
    <alternativeName>
        <fullName evidence="1">ATP synthase F(1) sector subunit delta</fullName>
    </alternativeName>
    <alternativeName>
        <fullName evidence="1">F-type ATPase subunit delta</fullName>
        <shortName evidence="1">F-ATPase subunit delta</shortName>
    </alternativeName>
</protein>
<organism>
    <name type="scientific">Rickettsia rickettsii (strain Iowa)</name>
    <dbReference type="NCBI Taxonomy" id="452659"/>
    <lineage>
        <taxon>Bacteria</taxon>
        <taxon>Pseudomonadati</taxon>
        <taxon>Pseudomonadota</taxon>
        <taxon>Alphaproteobacteria</taxon>
        <taxon>Rickettsiales</taxon>
        <taxon>Rickettsiaceae</taxon>
        <taxon>Rickettsieae</taxon>
        <taxon>Rickettsia</taxon>
        <taxon>spotted fever group</taxon>
    </lineage>
</organism>
<dbReference type="EMBL" id="CP000766">
    <property type="protein sequence ID" value="ABY73179.1"/>
    <property type="molecule type" value="Genomic_DNA"/>
</dbReference>
<dbReference type="RefSeq" id="WP_012151346.1">
    <property type="nucleotide sequence ID" value="NC_010263.3"/>
</dbReference>
<dbReference type="SMR" id="B0BVB9"/>
<dbReference type="GeneID" id="79937848"/>
<dbReference type="KEGG" id="rrj:RrIowa_1448"/>
<dbReference type="eggNOG" id="COG0712">
    <property type="taxonomic scope" value="Bacteria"/>
</dbReference>
<dbReference type="HOGENOM" id="CLU_085114_1_1_5"/>
<dbReference type="Proteomes" id="UP000000796">
    <property type="component" value="Chromosome"/>
</dbReference>
<dbReference type="GO" id="GO:0005886">
    <property type="term" value="C:plasma membrane"/>
    <property type="evidence" value="ECO:0007669"/>
    <property type="project" value="UniProtKB-SubCell"/>
</dbReference>
<dbReference type="GO" id="GO:0045259">
    <property type="term" value="C:proton-transporting ATP synthase complex"/>
    <property type="evidence" value="ECO:0007669"/>
    <property type="project" value="UniProtKB-KW"/>
</dbReference>
<dbReference type="GO" id="GO:0046933">
    <property type="term" value="F:proton-transporting ATP synthase activity, rotational mechanism"/>
    <property type="evidence" value="ECO:0007669"/>
    <property type="project" value="UniProtKB-UniRule"/>
</dbReference>
<dbReference type="Gene3D" id="1.10.520.20">
    <property type="entry name" value="N-terminal domain of the delta subunit of the F1F0-ATP synthase"/>
    <property type="match status" value="1"/>
</dbReference>
<dbReference type="HAMAP" id="MF_01416">
    <property type="entry name" value="ATP_synth_delta_bact"/>
    <property type="match status" value="1"/>
</dbReference>
<dbReference type="InterPro" id="IPR026015">
    <property type="entry name" value="ATP_synth_OSCP/delta_N_sf"/>
</dbReference>
<dbReference type="InterPro" id="IPR000711">
    <property type="entry name" value="ATPase_OSCP/dsu"/>
</dbReference>
<dbReference type="NCBIfam" id="TIGR01145">
    <property type="entry name" value="ATP_synt_delta"/>
    <property type="match status" value="1"/>
</dbReference>
<dbReference type="PANTHER" id="PTHR11910">
    <property type="entry name" value="ATP SYNTHASE DELTA CHAIN"/>
    <property type="match status" value="1"/>
</dbReference>
<dbReference type="Pfam" id="PF00213">
    <property type="entry name" value="OSCP"/>
    <property type="match status" value="1"/>
</dbReference>
<dbReference type="PRINTS" id="PR00125">
    <property type="entry name" value="ATPASEDELTA"/>
</dbReference>
<dbReference type="SUPFAM" id="SSF47928">
    <property type="entry name" value="N-terminal domain of the delta subunit of the F1F0-ATP synthase"/>
    <property type="match status" value="1"/>
</dbReference>
<comment type="function">
    <text evidence="1">F(1)F(0) ATP synthase produces ATP from ADP in the presence of a proton or sodium gradient. F-type ATPases consist of two structural domains, F(1) containing the extramembraneous catalytic core and F(0) containing the membrane proton channel, linked together by a central stalk and a peripheral stalk. During catalysis, ATP synthesis in the catalytic domain of F(1) is coupled via a rotary mechanism of the central stalk subunits to proton translocation.</text>
</comment>
<comment type="function">
    <text evidence="1">This protein is part of the stalk that links CF(0) to CF(1). It either transmits conformational changes from CF(0) to CF(1) or is implicated in proton conduction.</text>
</comment>
<comment type="subunit">
    <text evidence="1">F-type ATPases have 2 components, F(1) - the catalytic core - and F(0) - the membrane proton channel. F(1) has five subunits: alpha(3), beta(3), gamma(1), delta(1), epsilon(1). F(0) has three main subunits: a(1), b(2) and c(10-14). The alpha and beta chains form an alternating ring which encloses part of the gamma chain. F(1) is attached to F(0) by a central stalk formed by the gamma and epsilon chains, while a peripheral stalk is formed by the delta and b chains.</text>
</comment>
<comment type="subcellular location">
    <subcellularLocation>
        <location evidence="1">Cell inner membrane</location>
        <topology evidence="1">Peripheral membrane protein</topology>
    </subcellularLocation>
</comment>
<comment type="similarity">
    <text evidence="1">Belongs to the ATPase delta chain family.</text>
</comment>
<keyword id="KW-0066">ATP synthesis</keyword>
<keyword id="KW-0997">Cell inner membrane</keyword>
<keyword id="KW-1003">Cell membrane</keyword>
<keyword id="KW-0139">CF(1)</keyword>
<keyword id="KW-0375">Hydrogen ion transport</keyword>
<keyword id="KW-0406">Ion transport</keyword>
<keyword id="KW-0472">Membrane</keyword>
<keyword id="KW-0813">Transport</keyword>
<sequence>MNKGNLIKNYAVALFNNAIVDNIQDKIFEEITSINRIITDNFDIREFLFSPIVNKNDKINAVNSLAKNIKISTIVQNFLLLLVKNSRTAILSNIVDAYNTLLYESKNIKIVQVISANKLQPKEQEWIKSRIEKELNQKTEILFDIDNTIIGGIVIKYDSMLQDYSIKGSLEKITKALKTVNIAV</sequence>
<accession>B0BVB9</accession>
<evidence type="ECO:0000255" key="1">
    <source>
        <dbReference type="HAMAP-Rule" id="MF_01416"/>
    </source>
</evidence>
<gene>
    <name evidence="1" type="primary">atpH</name>
    <name type="ordered locus">RrIowa_1448</name>
</gene>
<feature type="chain" id="PRO_0000371103" description="ATP synthase subunit delta">
    <location>
        <begin position="1"/>
        <end position="184"/>
    </location>
</feature>
<name>ATPD_RICRO</name>
<reference key="1">
    <citation type="journal article" date="2008" name="Infect. Immun.">
        <title>Genomic comparison of virulent Rickettsia rickettsii Sheila Smith and avirulent Rickettsia rickettsii Iowa.</title>
        <authorList>
            <person name="Ellison D.W."/>
            <person name="Clark T.R."/>
            <person name="Sturdevant D.E."/>
            <person name="Virtaneva K."/>
            <person name="Porcella S.F."/>
            <person name="Hackstadt T."/>
        </authorList>
    </citation>
    <scope>NUCLEOTIDE SEQUENCE [LARGE SCALE GENOMIC DNA]</scope>
    <source>
        <strain>Iowa</strain>
    </source>
</reference>